<proteinExistence type="evidence at transcript level"/>
<gene>
    <name type="primary">OVGP1</name>
    <name type="synonym">OGP</name>
</gene>
<accession>Q28990</accession>
<sequence>MGKLLLWVGLVLVLKHHNGAAHKLVCYFANWAFSRPGPASILPRDLDPFLCTHLVFAFASMNDSQIVAKDARDESIFYPEFNQLKERNEKLKTLLSIGGWNFGTSRFTTMLSTFTNREKFIRSAIGLLRTHGFDGLDLFFLYPGLRGSPRRDRWNFLFLLEELLLAFRREAQLTMRPRLLLSAAVSADPHVIQKAYDVRLLGRLLDFINVLSYDLHGSWEKVTGHNSPLFSLSDDPKSSAYTMNYWRKLGAPPEKLLMGFPTYGRTFRLLKASKNELGAEAVGPASPGKYTKQAGFLAYYEVCSFVQRAKKRWIDHQYVPYAYRGKEWVGYDDDISFSYKAFFIKKEHFGGAMVWTLDLDDVRGTFCGTGPFPLVYMLNDLLLKAEVSSTLSPGFGLSTTVNSSRTCPESLAVTKDLTTDLGILPLGGEAVATETHGRSDNMTVTPGGGLVAPTRPTLSFGKLTVAPEGKTESPGEKAMTPVGHPSVTPGDMSVPPVPIQTGDRITPPRRQAVAPEKMTLPSGKRSD</sequence>
<protein>
    <recommendedName>
        <fullName>Oviduct-specific glycoprotein</fullName>
    </recommendedName>
    <alternativeName>
        <fullName>Estrogen-dependent oviduct protein</fullName>
    </alternativeName>
    <alternativeName>
        <fullName>Oviductal glycoprotein</fullName>
    </alternativeName>
    <alternativeName>
        <fullName>Oviductin</fullName>
    </alternativeName>
    <alternativeName>
        <fullName>POSP-E3</fullName>
    </alternativeName>
</protein>
<reference key="1">
    <citation type="journal article" date="1996" name="Biol. Reprod.">
        <title>Molecular cloning and characterization of an estrogen-dependent porcine oviductal secretory glycoprotein.</title>
        <authorList>
            <person name="Buhi W.C."/>
            <person name="Alvarez I.M."/>
            <person name="Choi I."/>
            <person name="Cleaver B.D."/>
            <person name="Simmen F.A."/>
        </authorList>
    </citation>
    <scope>NUCLEOTIDE SEQUENCE [MRNA]</scope>
    <source>
        <strain>Yorkshire X Duroc X Hampshire</strain>
        <tissue>Oviduct</tissue>
    </source>
</reference>
<feature type="signal peptide" evidence="1">
    <location>
        <begin position="1"/>
        <end position="21"/>
    </location>
</feature>
<feature type="chain" id="PRO_0000011977" description="Oviduct-specific glycoprotein">
    <location>
        <begin position="22"/>
        <end position="527"/>
    </location>
</feature>
<feature type="domain" description="GH18" evidence="3">
    <location>
        <begin position="22"/>
        <end position="385"/>
    </location>
</feature>
<feature type="region of interest" description="Disordered" evidence="4">
    <location>
        <begin position="433"/>
        <end position="527"/>
    </location>
</feature>
<feature type="binding site" evidence="3">
    <location>
        <begin position="71"/>
        <end position="72"/>
    </location>
    <ligand>
        <name>chitin</name>
        <dbReference type="ChEBI" id="CHEBI:17029"/>
    </ligand>
</feature>
<feature type="binding site" evidence="3">
    <location>
        <begin position="98"/>
        <end position="101"/>
    </location>
    <ligand>
        <name>chitin</name>
        <dbReference type="ChEBI" id="CHEBI:17029"/>
    </ligand>
</feature>
<feature type="binding site" evidence="3">
    <location>
        <position position="142"/>
    </location>
    <ligand>
        <name>chitin</name>
        <dbReference type="ChEBI" id="CHEBI:17029"/>
    </ligand>
</feature>
<feature type="binding site" evidence="3">
    <location>
        <begin position="211"/>
        <end position="214"/>
    </location>
    <ligand>
        <name>chitin</name>
        <dbReference type="ChEBI" id="CHEBI:17029"/>
    </ligand>
</feature>
<feature type="binding site" evidence="3">
    <location>
        <position position="355"/>
    </location>
    <ligand>
        <name>chitin</name>
        <dbReference type="ChEBI" id="CHEBI:17029"/>
    </ligand>
</feature>
<feature type="glycosylation site" description="N-linked (GlcNAc...) asparagine" evidence="2">
    <location>
        <position position="62"/>
    </location>
</feature>
<feature type="glycosylation site" description="N-linked (GlcNAc...) asparagine" evidence="2">
    <location>
        <position position="402"/>
    </location>
</feature>
<feature type="glycosylation site" description="N-linked (GlcNAc...) asparagine" evidence="2">
    <location>
        <position position="441"/>
    </location>
</feature>
<feature type="disulfide bond" evidence="3">
    <location>
        <begin position="26"/>
        <end position="51"/>
    </location>
</feature>
<organism>
    <name type="scientific">Sus scrofa</name>
    <name type="common">Pig</name>
    <dbReference type="NCBI Taxonomy" id="9823"/>
    <lineage>
        <taxon>Eukaryota</taxon>
        <taxon>Metazoa</taxon>
        <taxon>Chordata</taxon>
        <taxon>Craniata</taxon>
        <taxon>Vertebrata</taxon>
        <taxon>Euteleostomi</taxon>
        <taxon>Mammalia</taxon>
        <taxon>Eutheria</taxon>
        <taxon>Laurasiatheria</taxon>
        <taxon>Artiodactyla</taxon>
        <taxon>Suina</taxon>
        <taxon>Suidae</taxon>
        <taxon>Sus</taxon>
    </lineage>
</organism>
<name>OVGP1_PIG</name>
<keyword id="KW-0968">Cytoplasmic vesicle</keyword>
<keyword id="KW-1015">Disulfide bond</keyword>
<keyword id="KW-0278">Fertilization</keyword>
<keyword id="KW-0325">Glycoprotein</keyword>
<keyword id="KW-1185">Reference proteome</keyword>
<keyword id="KW-0732">Signal</keyword>
<evidence type="ECO:0000250" key="1"/>
<evidence type="ECO:0000255" key="2"/>
<evidence type="ECO:0000255" key="3">
    <source>
        <dbReference type="PROSITE-ProRule" id="PRU01258"/>
    </source>
</evidence>
<evidence type="ECO:0000256" key="4">
    <source>
        <dbReference type="SAM" id="MobiDB-lite"/>
    </source>
</evidence>
<evidence type="ECO:0000305" key="5"/>
<dbReference type="EMBL" id="U43490">
    <property type="protein sequence ID" value="AAA85445.1"/>
    <property type="molecule type" value="mRNA"/>
</dbReference>
<dbReference type="RefSeq" id="NP_999235.1">
    <property type="nucleotide sequence ID" value="NM_214070.1"/>
</dbReference>
<dbReference type="SMR" id="Q28990"/>
<dbReference type="FunCoup" id="Q28990">
    <property type="interactions" value="137"/>
</dbReference>
<dbReference type="STRING" id="9823.ENSSSCP00000039660"/>
<dbReference type="CAZy" id="GH18">
    <property type="family name" value="Glycoside Hydrolase Family 18"/>
</dbReference>
<dbReference type="GlyCosmos" id="Q28990">
    <property type="glycosylation" value="3 sites, No reported glycans"/>
</dbReference>
<dbReference type="GlyGen" id="Q28990">
    <property type="glycosylation" value="5 sites"/>
</dbReference>
<dbReference type="PaxDb" id="9823-ENSSSCP00000007244"/>
<dbReference type="GeneID" id="397140"/>
<dbReference type="KEGG" id="ssc:397140"/>
<dbReference type="CTD" id="5016"/>
<dbReference type="eggNOG" id="KOG2806">
    <property type="taxonomic scope" value="Eukaryota"/>
</dbReference>
<dbReference type="InParanoid" id="Q28990"/>
<dbReference type="OrthoDB" id="76388at2759"/>
<dbReference type="Proteomes" id="UP000008227">
    <property type="component" value="Unplaced"/>
</dbReference>
<dbReference type="Proteomes" id="UP000314985">
    <property type="component" value="Unplaced"/>
</dbReference>
<dbReference type="Proteomes" id="UP000694570">
    <property type="component" value="Unplaced"/>
</dbReference>
<dbReference type="Proteomes" id="UP000694571">
    <property type="component" value="Unplaced"/>
</dbReference>
<dbReference type="Proteomes" id="UP000694720">
    <property type="component" value="Unplaced"/>
</dbReference>
<dbReference type="Proteomes" id="UP000694722">
    <property type="component" value="Unplaced"/>
</dbReference>
<dbReference type="Proteomes" id="UP000694723">
    <property type="component" value="Unplaced"/>
</dbReference>
<dbReference type="Proteomes" id="UP000694724">
    <property type="component" value="Unplaced"/>
</dbReference>
<dbReference type="Proteomes" id="UP000694725">
    <property type="component" value="Unplaced"/>
</dbReference>
<dbReference type="Proteomes" id="UP000694726">
    <property type="component" value="Unplaced"/>
</dbReference>
<dbReference type="Proteomes" id="UP000694727">
    <property type="component" value="Unplaced"/>
</dbReference>
<dbReference type="Proteomes" id="UP000694728">
    <property type="component" value="Unplaced"/>
</dbReference>
<dbReference type="GO" id="GO:0005576">
    <property type="term" value="C:extracellular region"/>
    <property type="evidence" value="ECO:0000318"/>
    <property type="project" value="GO_Central"/>
</dbReference>
<dbReference type="GO" id="GO:0030133">
    <property type="term" value="C:transport vesicle"/>
    <property type="evidence" value="ECO:0007669"/>
    <property type="project" value="UniProtKB-SubCell"/>
</dbReference>
<dbReference type="GO" id="GO:0008061">
    <property type="term" value="F:chitin binding"/>
    <property type="evidence" value="ECO:0007669"/>
    <property type="project" value="InterPro"/>
</dbReference>
<dbReference type="GO" id="GO:0004568">
    <property type="term" value="F:chitinase activity"/>
    <property type="evidence" value="ECO:0000318"/>
    <property type="project" value="GO_Central"/>
</dbReference>
<dbReference type="GO" id="GO:0005975">
    <property type="term" value="P:carbohydrate metabolic process"/>
    <property type="evidence" value="ECO:0007669"/>
    <property type="project" value="InterPro"/>
</dbReference>
<dbReference type="GO" id="GO:0006032">
    <property type="term" value="P:chitin catabolic process"/>
    <property type="evidence" value="ECO:0000318"/>
    <property type="project" value="GO_Central"/>
</dbReference>
<dbReference type="GO" id="GO:0007338">
    <property type="term" value="P:single fertilization"/>
    <property type="evidence" value="ECO:0007669"/>
    <property type="project" value="UniProtKB-KW"/>
</dbReference>
<dbReference type="CDD" id="cd02872">
    <property type="entry name" value="GH18_chitolectin_chitotriosidase"/>
    <property type="match status" value="1"/>
</dbReference>
<dbReference type="FunFam" id="3.20.20.80:FF:000007">
    <property type="entry name" value="Acidic mammalian chitinase"/>
    <property type="match status" value="1"/>
</dbReference>
<dbReference type="FunFam" id="3.10.50.10:FF:000001">
    <property type="entry name" value="Chitinase 3-like 1"/>
    <property type="match status" value="1"/>
</dbReference>
<dbReference type="Gene3D" id="3.10.50.10">
    <property type="match status" value="1"/>
</dbReference>
<dbReference type="Gene3D" id="3.20.20.80">
    <property type="entry name" value="Glycosidases"/>
    <property type="match status" value="1"/>
</dbReference>
<dbReference type="InterPro" id="IPR011583">
    <property type="entry name" value="Chitinase_II/V-like_cat"/>
</dbReference>
<dbReference type="InterPro" id="IPR029070">
    <property type="entry name" value="Chitinase_insertion_sf"/>
</dbReference>
<dbReference type="InterPro" id="IPR001223">
    <property type="entry name" value="Glyco_hydro18_cat"/>
</dbReference>
<dbReference type="InterPro" id="IPR017853">
    <property type="entry name" value="Glycoside_hydrolase_SF"/>
</dbReference>
<dbReference type="InterPro" id="IPR050314">
    <property type="entry name" value="Glycosyl_Hydrlase_18"/>
</dbReference>
<dbReference type="PANTHER" id="PTHR11177">
    <property type="entry name" value="CHITINASE"/>
    <property type="match status" value="1"/>
</dbReference>
<dbReference type="PANTHER" id="PTHR11177:SF385">
    <property type="entry name" value="OVIDUCT-SPECIFIC GLYCOPROTEIN"/>
    <property type="match status" value="1"/>
</dbReference>
<dbReference type="Pfam" id="PF00704">
    <property type="entry name" value="Glyco_hydro_18"/>
    <property type="match status" value="1"/>
</dbReference>
<dbReference type="SMART" id="SM00636">
    <property type="entry name" value="Glyco_18"/>
    <property type="match status" value="1"/>
</dbReference>
<dbReference type="SUPFAM" id="SSF51445">
    <property type="entry name" value="(Trans)glycosidases"/>
    <property type="match status" value="1"/>
</dbReference>
<dbReference type="SUPFAM" id="SSF54556">
    <property type="entry name" value="Chitinase insertion domain"/>
    <property type="match status" value="1"/>
</dbReference>
<dbReference type="PROSITE" id="PS51910">
    <property type="entry name" value="GH18_2"/>
    <property type="match status" value="1"/>
</dbReference>
<comment type="function">
    <text>Binds to oocyte zona pellucida in vivo. May play a role in the fertilization process and/or early embryonic development.</text>
</comment>
<comment type="subcellular location">
    <subcellularLocation>
        <location>Cytoplasmic vesicle</location>
        <location>Secretory vesicle</location>
    </subcellularLocation>
    <text>Secretory granules.</text>
</comment>
<comment type="tissue specificity">
    <text>Oviduct.</text>
</comment>
<comment type="similarity">
    <text evidence="5">Belongs to the glycosyl hydrolase 18 family.</text>
</comment>